<sequence>MRVPVRWVLWDVKDTLLKVRRSVGEQYCREAQQAGLQLSPAQVETAFRLAYKQKSQLLPNYGRAQGMDSQVWWTGLVRDTFGQCGVHDPALLDKLANNLYHNFCGPENWEVFSDSNSTLKSCTALGLKQGVVSNFDRRLEGILRGCGLLTHFSFIVTSEDARVAKPDPAIFSQALERCGVPASSVVHVGDHYVKDYLTSRSLGIRGYLLNRKDGQKTHLDIPPEHILQSLDELPARLQHNTD</sequence>
<feature type="chain" id="PRO_0000287315" description="Haloacid dehalogenase-like hydrolase domain-containing protein 3">
    <location>
        <begin position="1"/>
        <end position="242"/>
    </location>
</feature>
<feature type="sequence conflict" description="In Ref. 2; AAI16520." evidence="1" ref="2">
    <original>L</original>
    <variation>Q</variation>
    <location>
        <position position="49"/>
    </location>
</feature>
<feature type="sequence conflict" description="In Ref. 2; AAI16520." evidence="1" ref="2">
    <original>I</original>
    <variation>L</variation>
    <location>
        <position position="155"/>
    </location>
</feature>
<feature type="sequence conflict" description="In Ref. 2; AAI16520." evidence="1" ref="2">
    <location>
        <position position="216"/>
    </location>
</feature>
<feature type="sequence conflict" description="In Ref. 2; AAH95713/AAI16520." evidence="1" ref="2">
    <original>N</original>
    <variation>D</variation>
    <location>
        <position position="240"/>
    </location>
</feature>
<gene>
    <name type="primary">hdhd3</name>
    <name type="ORF">si:ch211-10e8.6</name>
    <name type="ORF">zgc:136363</name>
</gene>
<keyword id="KW-1185">Reference proteome</keyword>
<comment type="similarity">
    <text evidence="1">Belongs to the HAD-like hydrolase superfamily.</text>
</comment>
<proteinExistence type="evidence at transcript level"/>
<name>HDHD3_DANRE</name>
<evidence type="ECO:0000305" key="1"/>
<dbReference type="EMBL" id="AL732598">
    <property type="protein sequence ID" value="CAE30381.1"/>
    <property type="molecule type" value="Genomic_DNA"/>
</dbReference>
<dbReference type="EMBL" id="BC095713">
    <property type="protein sequence ID" value="AAH95713.1"/>
    <property type="molecule type" value="mRNA"/>
</dbReference>
<dbReference type="EMBL" id="BC116519">
    <property type="protein sequence ID" value="AAI16520.1"/>
    <property type="molecule type" value="mRNA"/>
</dbReference>
<dbReference type="RefSeq" id="NP_001038732.2">
    <property type="nucleotide sequence ID" value="NM_001045267.2"/>
</dbReference>
<dbReference type="SMR" id="Q7T012"/>
<dbReference type="FunCoup" id="Q7T012">
    <property type="interactions" value="596"/>
</dbReference>
<dbReference type="STRING" id="7955.ENSDARP00000094552"/>
<dbReference type="PaxDb" id="7955-ENSDARP00000094552"/>
<dbReference type="Ensembl" id="ENSDART00000103776">
    <property type="protein sequence ID" value="ENSDARP00000094552"/>
    <property type="gene ID" value="ENSDARG00000053934"/>
</dbReference>
<dbReference type="GeneID" id="553464"/>
<dbReference type="KEGG" id="dre:553464"/>
<dbReference type="AGR" id="ZFIN:ZDB-GENE-040724-118"/>
<dbReference type="CTD" id="81932"/>
<dbReference type="ZFIN" id="ZDB-GENE-040724-118">
    <property type="gene designation" value="hdhd3"/>
</dbReference>
<dbReference type="eggNOG" id="KOG3085">
    <property type="taxonomic scope" value="Eukaryota"/>
</dbReference>
<dbReference type="HOGENOM" id="CLU_045011_8_0_1"/>
<dbReference type="InParanoid" id="Q7T012"/>
<dbReference type="OMA" id="WWRQLIA"/>
<dbReference type="OrthoDB" id="444127at2759"/>
<dbReference type="PhylomeDB" id="Q7T012"/>
<dbReference type="TreeFam" id="TF315144"/>
<dbReference type="PRO" id="PR:Q7T012"/>
<dbReference type="Proteomes" id="UP000000437">
    <property type="component" value="Chromosome 6"/>
</dbReference>
<dbReference type="Bgee" id="ENSDARG00000053934">
    <property type="expression patterns" value="Expressed in testis and 21 other cell types or tissues"/>
</dbReference>
<dbReference type="ExpressionAtlas" id="Q7T012">
    <property type="expression patterns" value="baseline"/>
</dbReference>
<dbReference type="GO" id="GO:0005634">
    <property type="term" value="C:nucleus"/>
    <property type="evidence" value="ECO:0000318"/>
    <property type="project" value="GO_Central"/>
</dbReference>
<dbReference type="CDD" id="cd16415">
    <property type="entry name" value="HAD_dREG-2_like"/>
    <property type="match status" value="1"/>
</dbReference>
<dbReference type="Gene3D" id="3.40.50.1000">
    <property type="entry name" value="HAD superfamily/HAD-like"/>
    <property type="match status" value="1"/>
</dbReference>
<dbReference type="Gene3D" id="1.10.150.720">
    <property type="entry name" value="Haloacid dehalogenase-like hydrolase"/>
    <property type="match status" value="1"/>
</dbReference>
<dbReference type="InterPro" id="IPR051828">
    <property type="entry name" value="HAD-like_hydrolase_domain"/>
</dbReference>
<dbReference type="InterPro" id="IPR036412">
    <property type="entry name" value="HAD-like_sf"/>
</dbReference>
<dbReference type="InterPro" id="IPR006439">
    <property type="entry name" value="HAD-SF_hydro_IA"/>
</dbReference>
<dbReference type="InterPro" id="IPR011949">
    <property type="entry name" value="HAD-SF_hydro_IA_REG-2-like"/>
</dbReference>
<dbReference type="InterPro" id="IPR044924">
    <property type="entry name" value="HAD-SF_hydro_IA_REG-2-like_cap"/>
</dbReference>
<dbReference type="InterPro" id="IPR023214">
    <property type="entry name" value="HAD_sf"/>
</dbReference>
<dbReference type="NCBIfam" id="TIGR02252">
    <property type="entry name" value="DREG-2"/>
    <property type="match status" value="1"/>
</dbReference>
<dbReference type="NCBIfam" id="TIGR01549">
    <property type="entry name" value="HAD-SF-IA-v1"/>
    <property type="match status" value="1"/>
</dbReference>
<dbReference type="PANTHER" id="PTHR46191">
    <property type="match status" value="1"/>
</dbReference>
<dbReference type="PANTHER" id="PTHR46191:SF2">
    <property type="entry name" value="HALOACID DEHALOGENASE-LIKE HYDROLASE DOMAIN-CONTAINING PROTEIN 3"/>
    <property type="match status" value="1"/>
</dbReference>
<dbReference type="Pfam" id="PF00702">
    <property type="entry name" value="Hydrolase"/>
    <property type="match status" value="1"/>
</dbReference>
<dbReference type="PRINTS" id="PR00413">
    <property type="entry name" value="HADHALOGNASE"/>
</dbReference>
<dbReference type="SFLD" id="SFLDG01129">
    <property type="entry name" value="C1.5:_HAD__Beta-PGM__Phosphata"/>
    <property type="match status" value="1"/>
</dbReference>
<dbReference type="SFLD" id="SFLDS00003">
    <property type="entry name" value="Haloacid_Dehalogenase"/>
    <property type="match status" value="1"/>
</dbReference>
<dbReference type="SUPFAM" id="SSF56784">
    <property type="entry name" value="HAD-like"/>
    <property type="match status" value="1"/>
</dbReference>
<protein>
    <recommendedName>
        <fullName>Haloacid dehalogenase-like hydrolase domain-containing protein 3</fullName>
    </recommendedName>
</protein>
<organism>
    <name type="scientific">Danio rerio</name>
    <name type="common">Zebrafish</name>
    <name type="synonym">Brachydanio rerio</name>
    <dbReference type="NCBI Taxonomy" id="7955"/>
    <lineage>
        <taxon>Eukaryota</taxon>
        <taxon>Metazoa</taxon>
        <taxon>Chordata</taxon>
        <taxon>Craniata</taxon>
        <taxon>Vertebrata</taxon>
        <taxon>Euteleostomi</taxon>
        <taxon>Actinopterygii</taxon>
        <taxon>Neopterygii</taxon>
        <taxon>Teleostei</taxon>
        <taxon>Ostariophysi</taxon>
        <taxon>Cypriniformes</taxon>
        <taxon>Danionidae</taxon>
        <taxon>Danioninae</taxon>
        <taxon>Danio</taxon>
    </lineage>
</organism>
<accession>Q7T012</accession>
<accession>Q1JQ17</accession>
<accession>Q502F9</accession>
<reference key="1">
    <citation type="journal article" date="2013" name="Nature">
        <title>The zebrafish reference genome sequence and its relationship to the human genome.</title>
        <authorList>
            <person name="Howe K."/>
            <person name="Clark M.D."/>
            <person name="Torroja C.F."/>
            <person name="Torrance J."/>
            <person name="Berthelot C."/>
            <person name="Muffato M."/>
            <person name="Collins J.E."/>
            <person name="Humphray S."/>
            <person name="McLaren K."/>
            <person name="Matthews L."/>
            <person name="McLaren S."/>
            <person name="Sealy I."/>
            <person name="Caccamo M."/>
            <person name="Churcher C."/>
            <person name="Scott C."/>
            <person name="Barrett J.C."/>
            <person name="Koch R."/>
            <person name="Rauch G.J."/>
            <person name="White S."/>
            <person name="Chow W."/>
            <person name="Kilian B."/>
            <person name="Quintais L.T."/>
            <person name="Guerra-Assuncao J.A."/>
            <person name="Zhou Y."/>
            <person name="Gu Y."/>
            <person name="Yen J."/>
            <person name="Vogel J.H."/>
            <person name="Eyre T."/>
            <person name="Redmond S."/>
            <person name="Banerjee R."/>
            <person name="Chi J."/>
            <person name="Fu B."/>
            <person name="Langley E."/>
            <person name="Maguire S.F."/>
            <person name="Laird G.K."/>
            <person name="Lloyd D."/>
            <person name="Kenyon E."/>
            <person name="Donaldson S."/>
            <person name="Sehra H."/>
            <person name="Almeida-King J."/>
            <person name="Loveland J."/>
            <person name="Trevanion S."/>
            <person name="Jones M."/>
            <person name="Quail M."/>
            <person name="Willey D."/>
            <person name="Hunt A."/>
            <person name="Burton J."/>
            <person name="Sims S."/>
            <person name="McLay K."/>
            <person name="Plumb B."/>
            <person name="Davis J."/>
            <person name="Clee C."/>
            <person name="Oliver K."/>
            <person name="Clark R."/>
            <person name="Riddle C."/>
            <person name="Elliot D."/>
            <person name="Threadgold G."/>
            <person name="Harden G."/>
            <person name="Ware D."/>
            <person name="Begum S."/>
            <person name="Mortimore B."/>
            <person name="Kerry G."/>
            <person name="Heath P."/>
            <person name="Phillimore B."/>
            <person name="Tracey A."/>
            <person name="Corby N."/>
            <person name="Dunn M."/>
            <person name="Johnson C."/>
            <person name="Wood J."/>
            <person name="Clark S."/>
            <person name="Pelan S."/>
            <person name="Griffiths G."/>
            <person name="Smith M."/>
            <person name="Glithero R."/>
            <person name="Howden P."/>
            <person name="Barker N."/>
            <person name="Lloyd C."/>
            <person name="Stevens C."/>
            <person name="Harley J."/>
            <person name="Holt K."/>
            <person name="Panagiotidis G."/>
            <person name="Lovell J."/>
            <person name="Beasley H."/>
            <person name="Henderson C."/>
            <person name="Gordon D."/>
            <person name="Auger K."/>
            <person name="Wright D."/>
            <person name="Collins J."/>
            <person name="Raisen C."/>
            <person name="Dyer L."/>
            <person name="Leung K."/>
            <person name="Robertson L."/>
            <person name="Ambridge K."/>
            <person name="Leongamornlert D."/>
            <person name="McGuire S."/>
            <person name="Gilderthorp R."/>
            <person name="Griffiths C."/>
            <person name="Manthravadi D."/>
            <person name="Nichol S."/>
            <person name="Barker G."/>
            <person name="Whitehead S."/>
            <person name="Kay M."/>
            <person name="Brown J."/>
            <person name="Murnane C."/>
            <person name="Gray E."/>
            <person name="Humphries M."/>
            <person name="Sycamore N."/>
            <person name="Barker D."/>
            <person name="Saunders D."/>
            <person name="Wallis J."/>
            <person name="Babbage A."/>
            <person name="Hammond S."/>
            <person name="Mashreghi-Mohammadi M."/>
            <person name="Barr L."/>
            <person name="Martin S."/>
            <person name="Wray P."/>
            <person name="Ellington A."/>
            <person name="Matthews N."/>
            <person name="Ellwood M."/>
            <person name="Woodmansey R."/>
            <person name="Clark G."/>
            <person name="Cooper J."/>
            <person name="Tromans A."/>
            <person name="Grafham D."/>
            <person name="Skuce C."/>
            <person name="Pandian R."/>
            <person name="Andrews R."/>
            <person name="Harrison E."/>
            <person name="Kimberley A."/>
            <person name="Garnett J."/>
            <person name="Fosker N."/>
            <person name="Hall R."/>
            <person name="Garner P."/>
            <person name="Kelly D."/>
            <person name="Bird C."/>
            <person name="Palmer S."/>
            <person name="Gehring I."/>
            <person name="Berger A."/>
            <person name="Dooley C.M."/>
            <person name="Ersan-Urun Z."/>
            <person name="Eser C."/>
            <person name="Geiger H."/>
            <person name="Geisler M."/>
            <person name="Karotki L."/>
            <person name="Kirn A."/>
            <person name="Konantz J."/>
            <person name="Konantz M."/>
            <person name="Oberlander M."/>
            <person name="Rudolph-Geiger S."/>
            <person name="Teucke M."/>
            <person name="Lanz C."/>
            <person name="Raddatz G."/>
            <person name="Osoegawa K."/>
            <person name="Zhu B."/>
            <person name="Rapp A."/>
            <person name="Widaa S."/>
            <person name="Langford C."/>
            <person name="Yang F."/>
            <person name="Schuster S.C."/>
            <person name="Carter N.P."/>
            <person name="Harrow J."/>
            <person name="Ning Z."/>
            <person name="Herrero J."/>
            <person name="Searle S.M."/>
            <person name="Enright A."/>
            <person name="Geisler R."/>
            <person name="Plasterk R.H."/>
            <person name="Lee C."/>
            <person name="Westerfield M."/>
            <person name="de Jong P.J."/>
            <person name="Zon L.I."/>
            <person name="Postlethwait J.H."/>
            <person name="Nusslein-Volhard C."/>
            <person name="Hubbard T.J."/>
            <person name="Roest Crollius H."/>
            <person name="Rogers J."/>
            <person name="Stemple D.L."/>
        </authorList>
    </citation>
    <scope>NUCLEOTIDE SEQUENCE [LARGE SCALE GENOMIC DNA]</scope>
    <source>
        <strain>Tuebingen</strain>
    </source>
</reference>
<reference key="2">
    <citation type="submission" date="2005-05" db="EMBL/GenBank/DDBJ databases">
        <authorList>
            <consortium name="NIH - Zebrafish Gene Collection (ZGC) project"/>
        </authorList>
    </citation>
    <scope>NUCLEOTIDE SEQUENCE [LARGE SCALE MRNA]</scope>
    <source>
        <tissue>Liver</tissue>
        <tissue>Ovary</tissue>
    </source>
</reference>